<dbReference type="EMBL" id="BA000022">
    <property type="protein sequence ID" value="BAA10118.1"/>
    <property type="molecule type" value="Genomic_DNA"/>
</dbReference>
<dbReference type="PIR" id="S76266">
    <property type="entry name" value="S76266"/>
</dbReference>
<dbReference type="SMR" id="Q55610"/>
<dbReference type="FunCoup" id="Q55610">
    <property type="interactions" value="121"/>
</dbReference>
<dbReference type="IntAct" id="Q55610">
    <property type="interactions" value="18"/>
</dbReference>
<dbReference type="STRING" id="1148.gene:10499610"/>
<dbReference type="PaxDb" id="1148-1001493"/>
<dbReference type="EnsemblBacteria" id="BAA10118">
    <property type="protein sequence ID" value="BAA10118"/>
    <property type="gene ID" value="BAA10118"/>
</dbReference>
<dbReference type="KEGG" id="syn:slr0774"/>
<dbReference type="eggNOG" id="COG0342">
    <property type="taxonomic scope" value="Bacteria"/>
</dbReference>
<dbReference type="InParanoid" id="Q55610"/>
<dbReference type="PhylomeDB" id="Q55610"/>
<dbReference type="Proteomes" id="UP000001425">
    <property type="component" value="Chromosome"/>
</dbReference>
<dbReference type="GO" id="GO:0005886">
    <property type="term" value="C:plasma membrane"/>
    <property type="evidence" value="ECO:0000318"/>
    <property type="project" value="GO_Central"/>
</dbReference>
<dbReference type="GO" id="GO:0015450">
    <property type="term" value="F:protein-transporting ATPase activity"/>
    <property type="evidence" value="ECO:0007669"/>
    <property type="project" value="InterPro"/>
</dbReference>
<dbReference type="GO" id="GO:0065002">
    <property type="term" value="P:intracellular protein transmembrane transport"/>
    <property type="evidence" value="ECO:0007669"/>
    <property type="project" value="UniProtKB-UniRule"/>
</dbReference>
<dbReference type="GO" id="GO:0006605">
    <property type="term" value="P:protein targeting"/>
    <property type="evidence" value="ECO:0007669"/>
    <property type="project" value="UniProtKB-UniRule"/>
</dbReference>
<dbReference type="GO" id="GO:0015031">
    <property type="term" value="P:protein transport"/>
    <property type="evidence" value="ECO:0000318"/>
    <property type="project" value="GO_Central"/>
</dbReference>
<dbReference type="GO" id="GO:0043952">
    <property type="term" value="P:protein transport by the Sec complex"/>
    <property type="evidence" value="ECO:0007669"/>
    <property type="project" value="UniProtKB-UniRule"/>
</dbReference>
<dbReference type="FunFam" id="1.20.1640.10:FF:000004">
    <property type="entry name" value="Protein translocase subunit SecD"/>
    <property type="match status" value="1"/>
</dbReference>
<dbReference type="Gene3D" id="3.30.1360.200">
    <property type="match status" value="1"/>
</dbReference>
<dbReference type="Gene3D" id="3.30.70.3400">
    <property type="match status" value="1"/>
</dbReference>
<dbReference type="Gene3D" id="1.20.1640.10">
    <property type="entry name" value="Multidrug efflux transporter AcrB transmembrane domain"/>
    <property type="match status" value="1"/>
</dbReference>
<dbReference type="HAMAP" id="MF_01463_B">
    <property type="entry name" value="SecD_B"/>
    <property type="match status" value="1"/>
</dbReference>
<dbReference type="InterPro" id="IPR001036">
    <property type="entry name" value="Acrflvin-R"/>
</dbReference>
<dbReference type="InterPro" id="IPR005791">
    <property type="entry name" value="SecD"/>
</dbReference>
<dbReference type="InterPro" id="IPR022813">
    <property type="entry name" value="SecD/SecF_arch_bac"/>
</dbReference>
<dbReference type="InterPro" id="IPR022646">
    <property type="entry name" value="SecD/SecF_CS"/>
</dbReference>
<dbReference type="InterPro" id="IPR048631">
    <property type="entry name" value="SecD_1st"/>
</dbReference>
<dbReference type="InterPro" id="IPR048634">
    <property type="entry name" value="SecD_SecF_C"/>
</dbReference>
<dbReference type="InterPro" id="IPR055344">
    <property type="entry name" value="SecD_SecF_C_bact"/>
</dbReference>
<dbReference type="InterPro" id="IPR054384">
    <property type="entry name" value="SecDF_P1_head"/>
</dbReference>
<dbReference type="NCBIfam" id="TIGR00916">
    <property type="entry name" value="2A0604s01"/>
    <property type="match status" value="1"/>
</dbReference>
<dbReference type="NCBIfam" id="TIGR01129">
    <property type="entry name" value="secD"/>
    <property type="match status" value="1"/>
</dbReference>
<dbReference type="PANTHER" id="PTHR30081:SF1">
    <property type="entry name" value="PROTEIN TRANSLOCASE SUBUNIT SECD"/>
    <property type="match status" value="1"/>
</dbReference>
<dbReference type="PANTHER" id="PTHR30081">
    <property type="entry name" value="PROTEIN-EXPORT MEMBRANE PROTEIN SEC"/>
    <property type="match status" value="1"/>
</dbReference>
<dbReference type="Pfam" id="PF07549">
    <property type="entry name" value="Sec_GG"/>
    <property type="match status" value="1"/>
</dbReference>
<dbReference type="Pfam" id="PF21760">
    <property type="entry name" value="SecD_1st"/>
    <property type="match status" value="1"/>
</dbReference>
<dbReference type="Pfam" id="PF02355">
    <property type="entry name" value="SecD_SecF_C"/>
    <property type="match status" value="1"/>
</dbReference>
<dbReference type="Pfam" id="PF22599">
    <property type="entry name" value="SecDF_P1_head"/>
    <property type="match status" value="1"/>
</dbReference>
<dbReference type="PRINTS" id="PR00702">
    <property type="entry name" value="ACRIFLAVINRP"/>
</dbReference>
<dbReference type="SUPFAM" id="SSF82866">
    <property type="entry name" value="Multidrug efflux transporter AcrB transmembrane domain"/>
    <property type="match status" value="1"/>
</dbReference>
<comment type="function">
    <text evidence="1">Part of the Sec protein translocase complex. Interacts with the SecYEG preprotein conducting channel. SecDF uses the proton motive force (PMF) to complete protein translocation after the ATP-dependent function of SecA.</text>
</comment>
<comment type="function">
    <text evidence="1">Probably participates in protein translocation into and across both the cytoplasmic and thylakoid membranes in cyanobacterial cells.</text>
</comment>
<comment type="subunit">
    <text evidence="1">Forms a complex with SecF. Part of the essential Sec protein translocation apparatus which comprises SecA, SecYEG and auxiliary proteins SecDF. Other proteins may also be involved.</text>
</comment>
<comment type="subcellular location">
    <subcellularLocation>
        <location evidence="1">Cell inner membrane</location>
        <topology evidence="1">Multi-pass membrane protein</topology>
    </subcellularLocation>
</comment>
<comment type="similarity">
    <text evidence="1">Belongs to the SecD/SecF family. SecD subfamily.</text>
</comment>
<reference key="1">
    <citation type="journal article" date="1995" name="DNA Res.">
        <title>Sequence analysis of the genome of the unicellular cyanobacterium Synechocystis sp. strain PCC6803. I. Sequence features in the 1 Mb region from map positions 64% to 92% of the genome.</title>
        <authorList>
            <person name="Kaneko T."/>
            <person name="Tanaka A."/>
            <person name="Sato S."/>
            <person name="Kotani H."/>
            <person name="Sazuka T."/>
            <person name="Miyajima N."/>
            <person name="Sugiura M."/>
            <person name="Tabata S."/>
        </authorList>
    </citation>
    <scope>NUCLEOTIDE SEQUENCE [LARGE SCALE GENOMIC DNA]</scope>
    <source>
        <strain>ATCC 27184 / PCC 6803 / N-1</strain>
    </source>
</reference>
<reference key="2">
    <citation type="journal article" date="1996" name="DNA Res.">
        <title>Sequence analysis of the genome of the unicellular cyanobacterium Synechocystis sp. strain PCC6803. II. Sequence determination of the entire genome and assignment of potential protein-coding regions.</title>
        <authorList>
            <person name="Kaneko T."/>
            <person name="Sato S."/>
            <person name="Kotani H."/>
            <person name="Tanaka A."/>
            <person name="Asamizu E."/>
            <person name="Nakamura Y."/>
            <person name="Miyajima N."/>
            <person name="Hirosawa M."/>
            <person name="Sugiura M."/>
            <person name="Sasamoto S."/>
            <person name="Kimura T."/>
            <person name="Hosouchi T."/>
            <person name="Matsuno A."/>
            <person name="Muraki A."/>
            <person name="Nakazaki N."/>
            <person name="Naruo K."/>
            <person name="Okumura S."/>
            <person name="Shimpo S."/>
            <person name="Takeuchi C."/>
            <person name="Wada T."/>
            <person name="Watanabe A."/>
            <person name="Yamada M."/>
            <person name="Yasuda M."/>
            <person name="Tabata S."/>
        </authorList>
    </citation>
    <scope>NUCLEOTIDE SEQUENCE [LARGE SCALE GENOMIC DNA]</scope>
    <source>
        <strain>ATCC 27184 / PCC 6803 / Kazusa</strain>
    </source>
</reference>
<gene>
    <name evidence="1" type="primary">secD</name>
    <name type="ordered locus">slr0774</name>
</gene>
<name>SECD_SYNY3</name>
<evidence type="ECO:0000255" key="1">
    <source>
        <dbReference type="HAMAP-Rule" id="MF_01463"/>
    </source>
</evidence>
<protein>
    <recommendedName>
        <fullName evidence="1">Protein translocase subunit SecD</fullName>
    </recommendedName>
</protein>
<proteinExistence type="inferred from homology"/>
<organism>
    <name type="scientific">Synechocystis sp. (strain ATCC 27184 / PCC 6803 / Kazusa)</name>
    <dbReference type="NCBI Taxonomy" id="1111708"/>
    <lineage>
        <taxon>Bacteria</taxon>
        <taxon>Bacillati</taxon>
        <taxon>Cyanobacteriota</taxon>
        <taxon>Cyanophyceae</taxon>
        <taxon>Synechococcales</taxon>
        <taxon>Merismopediaceae</taxon>
        <taxon>Synechocystis</taxon>
    </lineage>
</organism>
<feature type="chain" id="PRO_0000095972" description="Protein translocase subunit SecD">
    <location>
        <begin position="1"/>
        <end position="472"/>
    </location>
</feature>
<feature type="transmembrane region" description="Helical" evidence="1">
    <location>
        <begin position="7"/>
        <end position="27"/>
    </location>
</feature>
<feature type="transmembrane region" description="Helical" evidence="1">
    <location>
        <begin position="298"/>
        <end position="318"/>
    </location>
</feature>
<feature type="transmembrane region" description="Helical" evidence="1">
    <location>
        <begin position="326"/>
        <end position="345"/>
    </location>
</feature>
<feature type="transmembrane region" description="Helical" evidence="1">
    <location>
        <begin position="349"/>
        <end position="368"/>
    </location>
</feature>
<feature type="transmembrane region" description="Helical" evidence="1">
    <location>
        <begin position="392"/>
        <end position="414"/>
    </location>
</feature>
<feature type="transmembrane region" description="Helical" evidence="1">
    <location>
        <begin position="432"/>
        <end position="452"/>
    </location>
</feature>
<keyword id="KW-0997">Cell inner membrane</keyword>
<keyword id="KW-1003">Cell membrane</keyword>
<keyword id="KW-0472">Membrane</keyword>
<keyword id="KW-0653">Protein transport</keyword>
<keyword id="KW-1185">Reference proteome</keyword>
<keyword id="KW-0811">Translocation</keyword>
<keyword id="KW-0812">Transmembrane</keyword>
<keyword id="KW-1133">Transmembrane helix</keyword>
<keyword id="KW-0813">Transport</keyword>
<accession>Q55610</accession>
<sequence>MQRLRWLLLLIVVLVIGASFVLVKLPLQLGLDLRGGAQLTIEVQPTKEIPQIDNDSLVAVKTVIENRVNALGVSEPLVQTAGEDKIVVQLPGVTDPGQAERILGGTAQLEFQQQRPGTEGEFQAEYSIKRQLDAELENLRRSGASPENSDRLEELIKAKEESNKALLALFEPMGLTGKNLTDARPSPNQSGTAWEVALRFDEEGGQKFAELTQAVAGTGRSLGVFLDNDLISAPVVGVEFANTGITGGAAVITGNFTIDTANDLAVQLRGGSLPFPVEVVENRTVGATLGQESIRRSLVAGFVGLVLVLVFMAVYYRLPGIVADISLMIYAVLTLAAFALVGVTLTLPGIAGFILSIGMAVDANVLIFERTREELRAGNTLYRSVEAGFFRAFSSILDSNVTTLIACAALFWFGSGLVKGFALTLAIGVMVSLFTALTCSRTLLLVIVLSLPKVRQNPRLFCPNLSSVTAKS</sequence>